<evidence type="ECO:0000255" key="1">
    <source>
        <dbReference type="HAMAP-Rule" id="MF_00060"/>
    </source>
</evidence>
<organism>
    <name type="scientific">Thermosynechococcus vestitus (strain NIES-2133 / IAM M-273 / BP-1)</name>
    <dbReference type="NCBI Taxonomy" id="197221"/>
    <lineage>
        <taxon>Bacteria</taxon>
        <taxon>Bacillati</taxon>
        <taxon>Cyanobacteriota</taxon>
        <taxon>Cyanophyceae</taxon>
        <taxon>Acaryochloridales</taxon>
        <taxon>Thermosynechococcaceae</taxon>
        <taxon>Thermosynechococcus</taxon>
    </lineage>
</organism>
<feature type="chain" id="PRO_0000111843" description="5'-nucleotidase SurE">
    <location>
        <begin position="1"/>
        <end position="265"/>
    </location>
</feature>
<feature type="binding site" evidence="1">
    <location>
        <position position="8"/>
    </location>
    <ligand>
        <name>a divalent metal cation</name>
        <dbReference type="ChEBI" id="CHEBI:60240"/>
    </ligand>
</feature>
<feature type="binding site" evidence="1">
    <location>
        <position position="9"/>
    </location>
    <ligand>
        <name>a divalent metal cation</name>
        <dbReference type="ChEBI" id="CHEBI:60240"/>
    </ligand>
</feature>
<feature type="binding site" evidence="1">
    <location>
        <position position="40"/>
    </location>
    <ligand>
        <name>a divalent metal cation</name>
        <dbReference type="ChEBI" id="CHEBI:60240"/>
    </ligand>
</feature>
<feature type="binding site" evidence="1">
    <location>
        <position position="98"/>
    </location>
    <ligand>
        <name>a divalent metal cation</name>
        <dbReference type="ChEBI" id="CHEBI:60240"/>
    </ligand>
</feature>
<sequence>MRLLIANDDGVFAPGIRTLADTLAIAGHEVVVVCPDRERSATGHSLTVFDPIRAEVVSDRFHPRIKAWACSGTPSDCVKLALGALLEQPPDFVVSGINQGSNLGTDILYSGTVSAAMEGVIEGIPSIAISLASFTVHDFQPAADFTNRLLKALENAPLPPKVLLNVNVPALPASEIAGVVITRQGIRRYHDLFQKRVDPRGKTYYWLAGEVVEEYPQDPNQAPTDVEAIAQNLISITPLTFDLTYGQGVQDLTEWLRTVQPLFNL</sequence>
<protein>
    <recommendedName>
        <fullName evidence="1">5'-nucleotidase SurE</fullName>
        <ecNumber evidence="1">3.1.3.5</ecNumber>
    </recommendedName>
    <alternativeName>
        <fullName evidence="1">Nucleoside 5'-monophosphate phosphohydrolase</fullName>
    </alternativeName>
</protein>
<keyword id="KW-0963">Cytoplasm</keyword>
<keyword id="KW-0378">Hydrolase</keyword>
<keyword id="KW-0479">Metal-binding</keyword>
<keyword id="KW-0547">Nucleotide-binding</keyword>
<keyword id="KW-1185">Reference proteome</keyword>
<name>SURE_THEVB</name>
<accession>Q8DI06</accession>
<gene>
    <name evidence="1" type="primary">surE</name>
    <name type="ordered locus">tll1786</name>
</gene>
<reference key="1">
    <citation type="journal article" date="2002" name="DNA Res.">
        <title>Complete genome structure of the thermophilic cyanobacterium Thermosynechococcus elongatus BP-1.</title>
        <authorList>
            <person name="Nakamura Y."/>
            <person name="Kaneko T."/>
            <person name="Sato S."/>
            <person name="Ikeuchi M."/>
            <person name="Katoh H."/>
            <person name="Sasamoto S."/>
            <person name="Watanabe A."/>
            <person name="Iriguchi M."/>
            <person name="Kawashima K."/>
            <person name="Kimura T."/>
            <person name="Kishida Y."/>
            <person name="Kiyokawa C."/>
            <person name="Kohara M."/>
            <person name="Matsumoto M."/>
            <person name="Matsuno A."/>
            <person name="Nakazaki N."/>
            <person name="Shimpo S."/>
            <person name="Sugimoto M."/>
            <person name="Takeuchi C."/>
            <person name="Yamada M."/>
            <person name="Tabata S."/>
        </authorList>
    </citation>
    <scope>NUCLEOTIDE SEQUENCE [LARGE SCALE GENOMIC DNA]</scope>
    <source>
        <strain>NIES-2133 / IAM M-273 / BP-1</strain>
    </source>
</reference>
<dbReference type="EC" id="3.1.3.5" evidence="1"/>
<dbReference type="EMBL" id="BA000039">
    <property type="protein sequence ID" value="BAC09338.1"/>
    <property type="molecule type" value="Genomic_DNA"/>
</dbReference>
<dbReference type="RefSeq" id="NP_682576.1">
    <property type="nucleotide sequence ID" value="NC_004113.1"/>
</dbReference>
<dbReference type="RefSeq" id="WP_011057623.1">
    <property type="nucleotide sequence ID" value="NC_004113.1"/>
</dbReference>
<dbReference type="SMR" id="Q8DI06"/>
<dbReference type="STRING" id="197221.gene:10748391"/>
<dbReference type="EnsemblBacteria" id="BAC09338">
    <property type="protein sequence ID" value="BAC09338"/>
    <property type="gene ID" value="BAC09338"/>
</dbReference>
<dbReference type="KEGG" id="tel:tll1786"/>
<dbReference type="PATRIC" id="fig|197221.4.peg.1867"/>
<dbReference type="eggNOG" id="COG0496">
    <property type="taxonomic scope" value="Bacteria"/>
</dbReference>
<dbReference type="Proteomes" id="UP000000440">
    <property type="component" value="Chromosome"/>
</dbReference>
<dbReference type="GO" id="GO:0005737">
    <property type="term" value="C:cytoplasm"/>
    <property type="evidence" value="ECO:0007669"/>
    <property type="project" value="UniProtKB-SubCell"/>
</dbReference>
<dbReference type="GO" id="GO:0008254">
    <property type="term" value="F:3'-nucleotidase activity"/>
    <property type="evidence" value="ECO:0007669"/>
    <property type="project" value="TreeGrafter"/>
</dbReference>
<dbReference type="GO" id="GO:0008253">
    <property type="term" value="F:5'-nucleotidase activity"/>
    <property type="evidence" value="ECO:0007669"/>
    <property type="project" value="UniProtKB-UniRule"/>
</dbReference>
<dbReference type="GO" id="GO:0004309">
    <property type="term" value="F:exopolyphosphatase activity"/>
    <property type="evidence" value="ECO:0007669"/>
    <property type="project" value="TreeGrafter"/>
</dbReference>
<dbReference type="GO" id="GO:0046872">
    <property type="term" value="F:metal ion binding"/>
    <property type="evidence" value="ECO:0007669"/>
    <property type="project" value="UniProtKB-UniRule"/>
</dbReference>
<dbReference type="GO" id="GO:0000166">
    <property type="term" value="F:nucleotide binding"/>
    <property type="evidence" value="ECO:0007669"/>
    <property type="project" value="UniProtKB-KW"/>
</dbReference>
<dbReference type="FunFam" id="3.40.1210.10:FF:000001">
    <property type="entry name" value="5'/3'-nucleotidase SurE"/>
    <property type="match status" value="1"/>
</dbReference>
<dbReference type="Gene3D" id="3.40.1210.10">
    <property type="entry name" value="Survival protein SurE-like phosphatase/nucleotidase"/>
    <property type="match status" value="1"/>
</dbReference>
<dbReference type="HAMAP" id="MF_00060">
    <property type="entry name" value="SurE"/>
    <property type="match status" value="1"/>
</dbReference>
<dbReference type="InterPro" id="IPR030048">
    <property type="entry name" value="SurE"/>
</dbReference>
<dbReference type="InterPro" id="IPR002828">
    <property type="entry name" value="SurE-like_Pase/nucleotidase"/>
</dbReference>
<dbReference type="InterPro" id="IPR036523">
    <property type="entry name" value="SurE-like_sf"/>
</dbReference>
<dbReference type="NCBIfam" id="NF001490">
    <property type="entry name" value="PRK00346.1-4"/>
    <property type="match status" value="1"/>
</dbReference>
<dbReference type="NCBIfam" id="NF001492">
    <property type="entry name" value="PRK00346.2-2"/>
    <property type="match status" value="1"/>
</dbReference>
<dbReference type="NCBIfam" id="TIGR00087">
    <property type="entry name" value="surE"/>
    <property type="match status" value="1"/>
</dbReference>
<dbReference type="PANTHER" id="PTHR30457">
    <property type="entry name" value="5'-NUCLEOTIDASE SURE"/>
    <property type="match status" value="1"/>
</dbReference>
<dbReference type="PANTHER" id="PTHR30457:SF12">
    <property type="entry name" value="5'_3'-NUCLEOTIDASE SURE"/>
    <property type="match status" value="1"/>
</dbReference>
<dbReference type="Pfam" id="PF01975">
    <property type="entry name" value="SurE"/>
    <property type="match status" value="1"/>
</dbReference>
<dbReference type="SUPFAM" id="SSF64167">
    <property type="entry name" value="SurE-like"/>
    <property type="match status" value="1"/>
</dbReference>
<proteinExistence type="inferred from homology"/>
<comment type="function">
    <text evidence="1">Nucleotidase that shows phosphatase activity on nucleoside 5'-monophosphates.</text>
</comment>
<comment type="catalytic activity">
    <reaction evidence="1">
        <text>a ribonucleoside 5'-phosphate + H2O = a ribonucleoside + phosphate</text>
        <dbReference type="Rhea" id="RHEA:12484"/>
        <dbReference type="ChEBI" id="CHEBI:15377"/>
        <dbReference type="ChEBI" id="CHEBI:18254"/>
        <dbReference type="ChEBI" id="CHEBI:43474"/>
        <dbReference type="ChEBI" id="CHEBI:58043"/>
        <dbReference type="EC" id="3.1.3.5"/>
    </reaction>
</comment>
<comment type="cofactor">
    <cofactor evidence="1">
        <name>a divalent metal cation</name>
        <dbReference type="ChEBI" id="CHEBI:60240"/>
    </cofactor>
    <text evidence="1">Binds 1 divalent metal cation per subunit.</text>
</comment>
<comment type="subcellular location">
    <subcellularLocation>
        <location evidence="1">Cytoplasm</location>
    </subcellularLocation>
</comment>
<comment type="similarity">
    <text evidence="1">Belongs to the SurE nucleotidase family.</text>
</comment>